<accession>Q5KZR8</accession>
<reference key="1">
    <citation type="journal article" date="2004" name="Nucleic Acids Res.">
        <title>Thermoadaptation trait revealed by the genome sequence of thermophilic Geobacillus kaustophilus.</title>
        <authorList>
            <person name="Takami H."/>
            <person name="Takaki Y."/>
            <person name="Chee G.-J."/>
            <person name="Nishi S."/>
            <person name="Shimamura S."/>
            <person name="Suzuki H."/>
            <person name="Matsui S."/>
            <person name="Uchiyama I."/>
        </authorList>
    </citation>
    <scope>NUCLEOTIDE SEQUENCE [LARGE SCALE GENOMIC DNA]</scope>
    <source>
        <strain>HTA426</strain>
    </source>
</reference>
<sequence length="727" mass="81148">MGEYVQKGNIQVAKVLYDFVNEELLPNSGLDQDKFWSDFGALISDLTPRNKELLARRDEIQEKLNEWHKAHRGRFDFNEYKAFLTDIGYLEPEVEDFEITTDNVDDEIAVQAGPQLVVPLTNARYALNAANARWGSLYDALYGTDAISEEDGAERGSSYNPVRGAKVIAYGRQFLDEAVPLAQYSHKDAVQYAIVDGQLVVTTEGGATTGLKEPEKFVGFQGDPQHPTAVLLKNNGLHIEIQIDREHAVGKTDQAGVKDIVLEAAVTTIMDGEDSVAAVDAEDKVLVYRNLFGLVKGDLTATFEKNGKIMTRSLNPDRVYKTPDGGELVLPGRSLMFVRNVGHLMTNNAILHANGEEVHEGIMDAVITSLIMKHSLIGNTRYLNSRKGSIYIVKPKMHGSAEVAFANELFDRVEDMLGLERNTIKIGVMDEERRTSLNLKNCIYQVRDRIIFINTGFLDRTGDEIHTSMEAGPMLRKNEMKSSTWLQAYEKSNVAVGLAAGFRGRAQIGKGMWAMPDLMAEMLKQKGAQLKAGANTAWVPSPTAATLHALHYHQVNVSAVQSELANDRNDYRDDMLQIPVVDHPQWTAEEIQEELDNNCQSILGYVVRWIDQGIGCSKVPDIHNVGLMEDRATLRISSQILANWLHHGICTKEQVLETLKRMAKVVDEQNAGDPNYRPMAPNYDDSVAFQAACDLIFRGYEQPNGYTEPILHRRRQEAKAKFAAIQQ</sequence>
<gene>
    <name evidence="1" type="primary">glcB</name>
    <name type="ordered locus">GK1533</name>
</gene>
<protein>
    <recommendedName>
        <fullName evidence="1">Malate synthase G</fullName>
        <ecNumber evidence="1">2.3.3.9</ecNumber>
    </recommendedName>
</protein>
<evidence type="ECO:0000255" key="1">
    <source>
        <dbReference type="HAMAP-Rule" id="MF_00641"/>
    </source>
</evidence>
<proteinExistence type="inferred from homology"/>
<organism>
    <name type="scientific">Geobacillus kaustophilus (strain HTA426)</name>
    <dbReference type="NCBI Taxonomy" id="235909"/>
    <lineage>
        <taxon>Bacteria</taxon>
        <taxon>Bacillati</taxon>
        <taxon>Bacillota</taxon>
        <taxon>Bacilli</taxon>
        <taxon>Bacillales</taxon>
        <taxon>Anoxybacillaceae</taxon>
        <taxon>Geobacillus</taxon>
        <taxon>Geobacillus thermoleovorans group</taxon>
    </lineage>
</organism>
<dbReference type="EC" id="2.3.3.9" evidence="1"/>
<dbReference type="EMBL" id="BA000043">
    <property type="protein sequence ID" value="BAD75818.1"/>
    <property type="molecule type" value="Genomic_DNA"/>
</dbReference>
<dbReference type="RefSeq" id="WP_011231029.1">
    <property type="nucleotide sequence ID" value="NC_006510.1"/>
</dbReference>
<dbReference type="SMR" id="Q5KZR8"/>
<dbReference type="STRING" id="235909.GK1533"/>
<dbReference type="KEGG" id="gka:GK1533"/>
<dbReference type="eggNOG" id="COG2225">
    <property type="taxonomic scope" value="Bacteria"/>
</dbReference>
<dbReference type="HOGENOM" id="CLU_028446_1_0_9"/>
<dbReference type="UniPathway" id="UPA00703">
    <property type="reaction ID" value="UER00720"/>
</dbReference>
<dbReference type="Proteomes" id="UP000001172">
    <property type="component" value="Chromosome"/>
</dbReference>
<dbReference type="GO" id="GO:0005829">
    <property type="term" value="C:cytosol"/>
    <property type="evidence" value="ECO:0007669"/>
    <property type="project" value="TreeGrafter"/>
</dbReference>
<dbReference type="GO" id="GO:0000287">
    <property type="term" value="F:magnesium ion binding"/>
    <property type="evidence" value="ECO:0007669"/>
    <property type="project" value="TreeGrafter"/>
</dbReference>
<dbReference type="GO" id="GO:0004474">
    <property type="term" value="F:malate synthase activity"/>
    <property type="evidence" value="ECO:0007669"/>
    <property type="project" value="UniProtKB-UniRule"/>
</dbReference>
<dbReference type="GO" id="GO:0009436">
    <property type="term" value="P:glyoxylate catabolic process"/>
    <property type="evidence" value="ECO:0007669"/>
    <property type="project" value="TreeGrafter"/>
</dbReference>
<dbReference type="GO" id="GO:0006097">
    <property type="term" value="P:glyoxylate cycle"/>
    <property type="evidence" value="ECO:0007669"/>
    <property type="project" value="UniProtKB-UniRule"/>
</dbReference>
<dbReference type="GO" id="GO:0006099">
    <property type="term" value="P:tricarboxylic acid cycle"/>
    <property type="evidence" value="ECO:0007669"/>
    <property type="project" value="UniProtKB-KW"/>
</dbReference>
<dbReference type="CDD" id="cd00728">
    <property type="entry name" value="malate_synt_G"/>
    <property type="match status" value="1"/>
</dbReference>
<dbReference type="FunFam" id="3.20.20.360:FF:000002">
    <property type="entry name" value="Malate synthase G"/>
    <property type="match status" value="1"/>
</dbReference>
<dbReference type="Gene3D" id="3.20.20.360">
    <property type="entry name" value="Malate synthase, domain 3"/>
    <property type="match status" value="2"/>
</dbReference>
<dbReference type="Gene3D" id="1.20.1220.12">
    <property type="entry name" value="Malate synthase, domain III"/>
    <property type="match status" value="1"/>
</dbReference>
<dbReference type="HAMAP" id="MF_00641">
    <property type="entry name" value="Malate_synth_G"/>
    <property type="match status" value="1"/>
</dbReference>
<dbReference type="InterPro" id="IPR044856">
    <property type="entry name" value="Malate_synth_C_sf"/>
</dbReference>
<dbReference type="InterPro" id="IPR011076">
    <property type="entry name" value="Malate_synth_sf"/>
</dbReference>
<dbReference type="InterPro" id="IPR001465">
    <property type="entry name" value="Malate_synthase_TIM"/>
</dbReference>
<dbReference type="InterPro" id="IPR006253">
    <property type="entry name" value="Malate_synthG"/>
</dbReference>
<dbReference type="InterPro" id="IPR048355">
    <property type="entry name" value="MS_C"/>
</dbReference>
<dbReference type="InterPro" id="IPR048356">
    <property type="entry name" value="MS_N"/>
</dbReference>
<dbReference type="InterPro" id="IPR046363">
    <property type="entry name" value="MS_N_TIM-barrel_dom"/>
</dbReference>
<dbReference type="InterPro" id="IPR048357">
    <property type="entry name" value="MSG_insertion"/>
</dbReference>
<dbReference type="NCBIfam" id="TIGR01345">
    <property type="entry name" value="malate_syn_G"/>
    <property type="match status" value="1"/>
</dbReference>
<dbReference type="NCBIfam" id="NF002825">
    <property type="entry name" value="PRK02999.1"/>
    <property type="match status" value="1"/>
</dbReference>
<dbReference type="PANTHER" id="PTHR42739">
    <property type="entry name" value="MALATE SYNTHASE G"/>
    <property type="match status" value="1"/>
</dbReference>
<dbReference type="PANTHER" id="PTHR42739:SF1">
    <property type="entry name" value="MALATE SYNTHASE G"/>
    <property type="match status" value="1"/>
</dbReference>
<dbReference type="Pfam" id="PF20659">
    <property type="entry name" value="MS_C"/>
    <property type="match status" value="1"/>
</dbReference>
<dbReference type="Pfam" id="PF20656">
    <property type="entry name" value="MS_N"/>
    <property type="match status" value="1"/>
</dbReference>
<dbReference type="Pfam" id="PF01274">
    <property type="entry name" value="MS_TIM-barrel"/>
    <property type="match status" value="1"/>
</dbReference>
<dbReference type="Pfam" id="PF20658">
    <property type="entry name" value="MSG_insertion"/>
    <property type="match status" value="1"/>
</dbReference>
<dbReference type="SUPFAM" id="SSF51645">
    <property type="entry name" value="Malate synthase G"/>
    <property type="match status" value="1"/>
</dbReference>
<comment type="function">
    <text evidence="1">Involved in the glycolate utilization. Catalyzes the condensation and subsequent hydrolysis of acetyl-coenzyme A (acetyl-CoA) and glyoxylate to form malate and CoA.</text>
</comment>
<comment type="catalytic activity">
    <reaction evidence="1">
        <text>glyoxylate + acetyl-CoA + H2O = (S)-malate + CoA + H(+)</text>
        <dbReference type="Rhea" id="RHEA:18181"/>
        <dbReference type="ChEBI" id="CHEBI:15377"/>
        <dbReference type="ChEBI" id="CHEBI:15378"/>
        <dbReference type="ChEBI" id="CHEBI:15589"/>
        <dbReference type="ChEBI" id="CHEBI:36655"/>
        <dbReference type="ChEBI" id="CHEBI:57287"/>
        <dbReference type="ChEBI" id="CHEBI:57288"/>
        <dbReference type="EC" id="2.3.3.9"/>
    </reaction>
</comment>
<comment type="cofactor">
    <cofactor evidence="1">
        <name>Mg(2+)</name>
        <dbReference type="ChEBI" id="CHEBI:18420"/>
    </cofactor>
</comment>
<comment type="pathway">
    <text evidence="1">Carbohydrate metabolism; glyoxylate cycle; (S)-malate from isocitrate: step 2/2.</text>
</comment>
<comment type="subunit">
    <text evidence="1">Monomer.</text>
</comment>
<comment type="subcellular location">
    <subcellularLocation>
        <location evidence="1">Cytoplasm</location>
    </subcellularLocation>
</comment>
<comment type="similarity">
    <text evidence="1">Belongs to the malate synthase family. GlcB subfamily.</text>
</comment>
<name>MASZ_GEOKA</name>
<keyword id="KW-0963">Cytoplasm</keyword>
<keyword id="KW-0329">Glyoxylate bypass</keyword>
<keyword id="KW-0460">Magnesium</keyword>
<keyword id="KW-0479">Metal-binding</keyword>
<keyword id="KW-0558">Oxidation</keyword>
<keyword id="KW-1185">Reference proteome</keyword>
<keyword id="KW-0808">Transferase</keyword>
<keyword id="KW-0816">Tricarboxylic acid cycle</keyword>
<feature type="chain" id="PRO_1000056902" description="Malate synthase G">
    <location>
        <begin position="1"/>
        <end position="727"/>
    </location>
</feature>
<feature type="active site" description="Proton acceptor" evidence="1">
    <location>
        <position position="339"/>
    </location>
</feature>
<feature type="active site" description="Proton donor" evidence="1">
    <location>
        <position position="630"/>
    </location>
</feature>
<feature type="binding site" evidence="1">
    <location>
        <position position="117"/>
    </location>
    <ligand>
        <name>acetyl-CoA</name>
        <dbReference type="ChEBI" id="CHEBI:57288"/>
    </ligand>
</feature>
<feature type="binding site" evidence="1">
    <location>
        <begin position="124"/>
        <end position="125"/>
    </location>
    <ligand>
        <name>acetyl-CoA</name>
        <dbReference type="ChEBI" id="CHEBI:57288"/>
    </ligand>
</feature>
<feature type="binding site" evidence="1">
    <location>
        <position position="275"/>
    </location>
    <ligand>
        <name>acetyl-CoA</name>
        <dbReference type="ChEBI" id="CHEBI:57288"/>
    </ligand>
</feature>
<feature type="binding site" evidence="1">
    <location>
        <position position="312"/>
    </location>
    <ligand>
        <name>acetyl-CoA</name>
        <dbReference type="ChEBI" id="CHEBI:57288"/>
    </ligand>
</feature>
<feature type="binding site" evidence="1">
    <location>
        <position position="339"/>
    </location>
    <ligand>
        <name>glyoxylate</name>
        <dbReference type="ChEBI" id="CHEBI:36655"/>
    </ligand>
</feature>
<feature type="binding site" evidence="1">
    <location>
        <position position="431"/>
    </location>
    <ligand>
        <name>glyoxylate</name>
        <dbReference type="ChEBI" id="CHEBI:36655"/>
    </ligand>
</feature>
<feature type="binding site" evidence="1">
    <location>
        <position position="431"/>
    </location>
    <ligand>
        <name>Mg(2+)</name>
        <dbReference type="ChEBI" id="CHEBI:18420"/>
    </ligand>
</feature>
<feature type="binding site" evidence="1">
    <location>
        <begin position="456"/>
        <end position="459"/>
    </location>
    <ligand>
        <name>glyoxylate</name>
        <dbReference type="ChEBI" id="CHEBI:36655"/>
    </ligand>
</feature>
<feature type="binding site" evidence="1">
    <location>
        <position position="459"/>
    </location>
    <ligand>
        <name>Mg(2+)</name>
        <dbReference type="ChEBI" id="CHEBI:18420"/>
    </ligand>
</feature>
<feature type="binding site" evidence="1">
    <location>
        <position position="540"/>
    </location>
    <ligand>
        <name>acetyl-CoA</name>
        <dbReference type="ChEBI" id="CHEBI:57288"/>
    </ligand>
</feature>
<feature type="modified residue" description="Cysteine sulfenic acid (-SOH)" evidence="1">
    <location>
        <position position="616"/>
    </location>
</feature>